<dbReference type="EC" id="3.1.1.4" evidence="2 11"/>
<dbReference type="EMBL" id="AF162273">
    <property type="protein sequence ID" value="AAD46614.1"/>
    <property type="molecule type" value="Genomic_DNA"/>
</dbReference>
<dbReference type="EMBL" id="AF162273">
    <property type="protein sequence ID" value="AAD46615.1"/>
    <property type="molecule type" value="Genomic_DNA"/>
</dbReference>
<dbReference type="EMBL" id="U53595">
    <property type="protein sequence ID" value="AAB47453.1"/>
    <property type="molecule type" value="Genomic_DNA"/>
</dbReference>
<dbReference type="PDB" id="1S58">
    <property type="method" value="X-ray"/>
    <property type="resolution" value="3.50 A"/>
    <property type="chains" value="A=1-554"/>
</dbReference>
<dbReference type="PDBsum" id="1S58"/>
<dbReference type="SMR" id="Q9PZT0"/>
<dbReference type="ABCD" id="Q9PZT0">
    <property type="antibodies" value="2 sequenced antibodies"/>
</dbReference>
<dbReference type="KEGG" id="vg:11293627"/>
<dbReference type="EvolutionaryTrace" id="Q9PZT0"/>
<dbReference type="Proteomes" id="UP000006624">
    <property type="component" value="Segment"/>
</dbReference>
<dbReference type="GO" id="GO:0043657">
    <property type="term" value="C:host cell"/>
    <property type="evidence" value="ECO:0007669"/>
    <property type="project" value="GOC"/>
</dbReference>
<dbReference type="GO" id="GO:0030430">
    <property type="term" value="C:host cell cytoplasm"/>
    <property type="evidence" value="ECO:0007669"/>
    <property type="project" value="UniProtKB-SubCell"/>
</dbReference>
<dbReference type="GO" id="GO:0042025">
    <property type="term" value="C:host cell nucleus"/>
    <property type="evidence" value="ECO:0000314"/>
    <property type="project" value="UniProtKB"/>
</dbReference>
<dbReference type="GO" id="GO:0039615">
    <property type="term" value="C:T=1 icosahedral viral capsid"/>
    <property type="evidence" value="ECO:0007669"/>
    <property type="project" value="UniProtKB-KW"/>
</dbReference>
<dbReference type="GO" id="GO:0019028">
    <property type="term" value="C:viral capsid"/>
    <property type="evidence" value="ECO:0000314"/>
    <property type="project" value="UniProtKB"/>
</dbReference>
<dbReference type="GO" id="GO:0046872">
    <property type="term" value="F:metal ion binding"/>
    <property type="evidence" value="ECO:0007669"/>
    <property type="project" value="UniProtKB-KW"/>
</dbReference>
<dbReference type="GO" id="GO:0004623">
    <property type="term" value="F:phospholipase A2 activity"/>
    <property type="evidence" value="ECO:0000314"/>
    <property type="project" value="UniProtKB"/>
</dbReference>
<dbReference type="GO" id="GO:0005198">
    <property type="term" value="F:structural molecule activity"/>
    <property type="evidence" value="ECO:0007669"/>
    <property type="project" value="InterPro"/>
</dbReference>
<dbReference type="GO" id="GO:0075512">
    <property type="term" value="P:clathrin-dependent endocytosis of virus by host cell"/>
    <property type="evidence" value="ECO:0000314"/>
    <property type="project" value="UniProtKB"/>
</dbReference>
<dbReference type="GO" id="GO:0016042">
    <property type="term" value="P:lipid catabolic process"/>
    <property type="evidence" value="ECO:0007669"/>
    <property type="project" value="UniProtKB-KW"/>
</dbReference>
<dbReference type="GO" id="GO:0075521">
    <property type="term" value="P:microtubule-dependent intracellular transport of viral material towards nucleus"/>
    <property type="evidence" value="ECO:0007669"/>
    <property type="project" value="UniProtKB-KW"/>
</dbReference>
<dbReference type="GO" id="GO:0046813">
    <property type="term" value="P:receptor-mediated virion attachment to host cell"/>
    <property type="evidence" value="ECO:0000314"/>
    <property type="project" value="UniProtKB"/>
</dbReference>
<dbReference type="GO" id="GO:0140267">
    <property type="term" value="P:symbiont entry into host cell via permeabilization of host membrane"/>
    <property type="evidence" value="ECO:0007669"/>
    <property type="project" value="UniProtKB-KW"/>
</dbReference>
<dbReference type="GO" id="GO:0075732">
    <property type="term" value="P:viral penetration into host nucleus"/>
    <property type="evidence" value="ECO:0000314"/>
    <property type="project" value="UniProtKB"/>
</dbReference>
<dbReference type="Gene3D" id="2.170.30.10">
    <property type="entry name" value="Parvovirus coat protein VP1/VP2"/>
    <property type="match status" value="1"/>
</dbReference>
<dbReference type="InterPro" id="IPR016184">
    <property type="entry name" value="Capsid/spike_ssDNA_virus"/>
</dbReference>
<dbReference type="InterPro" id="IPR001403">
    <property type="entry name" value="Parvovirus_coat"/>
</dbReference>
<dbReference type="InterPro" id="IPR013607">
    <property type="entry name" value="Phospholipase_A2-like"/>
</dbReference>
<dbReference type="InterPro" id="IPR036952">
    <property type="entry name" value="VP1/VP2"/>
</dbReference>
<dbReference type="Pfam" id="PF00740">
    <property type="entry name" value="Parvo_coat"/>
    <property type="match status" value="1"/>
</dbReference>
<dbReference type="Pfam" id="PF08398">
    <property type="entry name" value="Phospholip_A2_4"/>
    <property type="match status" value="1"/>
</dbReference>
<dbReference type="SUPFAM" id="SSF88645">
    <property type="entry name" value="ssDNA viruses"/>
    <property type="match status" value="1"/>
</dbReference>
<feature type="chain" id="PRO_0000428714" description="Minor capsid protein VP1">
    <location>
        <begin position="1"/>
        <end position="781"/>
    </location>
</feature>
<feature type="region of interest" description="Binding to the host cell receptor and internalization" evidence="12">
    <location>
        <begin position="5"/>
        <end position="80"/>
    </location>
</feature>
<feature type="region of interest" description="Disordered" evidence="1">
    <location>
        <begin position="77"/>
        <end position="111"/>
    </location>
</feature>
<feature type="region of interest" description="Phospholipase A2-like" evidence="2 9">
    <location>
        <begin position="123"/>
        <end position="181"/>
    </location>
</feature>
<feature type="region of interest" description="Disordered" evidence="1">
    <location>
        <begin position="524"/>
        <end position="561"/>
    </location>
</feature>
<feature type="short sequence motif" description="Nuclear localization signal" evidence="3 15">
    <location>
        <begin position="720"/>
        <end position="730"/>
    </location>
</feature>
<feature type="compositionally biased region" description="Polar residues" evidence="1">
    <location>
        <begin position="524"/>
        <end position="535"/>
    </location>
</feature>
<feature type="compositionally biased region" description="Polar residues" evidence="1">
    <location>
        <begin position="542"/>
        <end position="553"/>
    </location>
</feature>
<feature type="splice variant" id="VSP_054247" description="In isoform Major capsid protein VP2." evidence="16">
    <location>
        <begin position="1"/>
        <end position="227"/>
    </location>
</feature>
<feature type="mutagenesis site" description="50% loss of virus internalization into the host cell." evidence="12">
    <original>F</original>
    <variation>C</variation>
    <location>
        <position position="15"/>
    </location>
</feature>
<feature type="mutagenesis site" description="70% loss of virus internalization into the host cell." evidence="12">
    <original>F</original>
    <variation>W</variation>
    <location>
        <position position="15"/>
    </location>
</feature>
<feature type="mutagenesis site" description="Almost complete loss of virus internalization into the host cell." evidence="12">
    <original>A</original>
    <variation>S</variation>
    <location>
        <position position="16"/>
    </location>
</feature>
<feature type="mutagenesis site" description="70% loss of virus internalization into the host cell." evidence="12">
    <original>V</original>
    <variation>A</variation>
    <location>
        <position position="19"/>
    </location>
</feature>
<feature type="mutagenesis site" description="70% loss of virus internalization into the host cell." evidence="12">
    <original>V</original>
    <variation>S</variation>
    <location>
        <position position="19"/>
    </location>
</feature>
<feature type="mutagenesis site" description="70% loss of virus internalization into the host cell." evidence="12">
    <original>Y</original>
    <variation>C</variation>
    <location>
        <position position="20"/>
    </location>
</feature>
<feature type="mutagenesis site" description="Almost complete loss of virus internalization into the host cell." evidence="12">
    <original>Y</original>
    <variation>W</variation>
    <location>
        <position position="20"/>
    </location>
</feature>
<feature type="mutagenesis site" description="80% loss of virus internalization into the host cell." evidence="12">
    <original>Q</original>
    <variation>A</variation>
    <location>
        <position position="21"/>
    </location>
</feature>
<feature type="mutagenesis site" description="50% loss of virus internalization into the host cell." evidence="12">
    <original>Q</original>
    <variation>P</variation>
    <location>
        <position position="21"/>
    </location>
</feature>
<feature type="mutagenesis site" description="30% loss of virus internalization into the host cell." evidence="12">
    <original>Q</original>
    <variation>A</variation>
    <location>
        <position position="22"/>
    </location>
</feature>
<feature type="mutagenesis site" description="10% loss of virus internalization into the host cell." evidence="12">
    <original>Q</original>
    <variation>P</variation>
    <location>
        <position position="22"/>
    </location>
</feature>
<feature type="mutagenesis site" description="60% loss of virus internalization into the host cell." evidence="12">
    <original>F</original>
    <variation>S</variation>
    <location>
        <position position="23"/>
    </location>
</feature>
<feature type="mutagenesis site" description="70% loss of virus internalization into the host cell." evidence="12">
    <original>F</original>
    <variation>S</variation>
    <location>
        <position position="26"/>
    </location>
</feature>
<feature type="mutagenesis site" description="30% loss of virus internalization into the host cell." evidence="12">
    <original>Y</original>
    <variation>C</variation>
    <location>
        <position position="27"/>
    </location>
</feature>
<feature type="mutagenesis site" description="70% loss of virus internalization into the host cell." evidence="12">
    <original>Y</original>
    <variation>W</variation>
    <location>
        <position position="27"/>
    </location>
</feature>
<feature type="mutagenesis site" description="Almost complete loss of virus internalization into the host cell." evidence="12">
    <original>K</original>
    <variation>A</variation>
    <location>
        <position position="29"/>
    </location>
</feature>
<feature type="mutagenesis site" description="Very low levels of phospholipase A2-like activity." evidence="11">
    <original>Y</original>
    <variation>A</variation>
    <location>
        <position position="130"/>
    </location>
</feature>
<feature type="mutagenesis site" description="Complete loss of phospholipase A2-like activity." evidence="11">
    <original>G</original>
    <variation>A</variation>
    <location>
        <position position="132"/>
    </location>
</feature>
<feature type="mutagenesis site" description="No effect on phospholipase A2-like activity." evidence="11">
    <original>P</original>
    <variation>R</variation>
    <location>
        <position position="133"/>
    </location>
</feature>
<feature type="mutagenesis site" description="Very low levels of phospholipase A2-like activity." evidence="11">
    <original>H</original>
    <variation>A</variation>
    <location>
        <position position="153"/>
    </location>
</feature>
<feature type="mutagenesis site" description="Complete loss of phospholipase A2-like activity." evidence="11">
    <original>D</original>
    <variation>A</variation>
    <location>
        <position position="154"/>
    </location>
</feature>
<feature type="mutagenesis site" description="Very low levels of phospholipase A2-like activity." evidence="11">
    <original>Y</original>
    <variation>F</variation>
    <location>
        <position position="157"/>
    </location>
</feature>
<feature type="mutagenesis site" description="Very low levels of phospholipase A2-like activity." evidence="11">
    <original>K</original>
    <variation>R</variation>
    <location>
        <position position="162"/>
    </location>
</feature>
<feature type="mutagenesis site" description="Complete loss of phospholipase A2-like activity." evidence="11">
    <original>Y</original>
    <variation>F</variation>
    <location>
        <position position="168"/>
    </location>
</feature>
<feature type="mutagenesis site" description="Very low levels of phospholipase A2-like activity." evidence="11">
    <original>D</original>
    <variation>A</variation>
    <location>
        <position position="175"/>
    </location>
</feature>
<feature type="mutagenesis site" description="80% loss of infectivity." evidence="9">
    <original>E</original>
    <variation>K</variation>
    <location>
        <position position="176"/>
    </location>
</feature>
<feature type="mutagenesis site" description="10% increased phospholipase A2-like activity." evidence="11">
    <original>D</original>
    <variation>A</variation>
    <location>
        <position position="195"/>
    </location>
</feature>
<feature type="mutagenesis site" description="No effect on phospholipase A2-like activity." evidence="11">
    <original>A</original>
    <variation>Y</variation>
    <location>
        <position position="207"/>
    </location>
</feature>
<feature type="mutagenesis site" description="Host nucleocytoplasmic localization." evidence="3">
    <original>K</original>
    <variation>A</variation>
    <location>
        <position position="720"/>
    </location>
</feature>
<feature type="mutagenesis site" description="Host cytoplasmic localization." evidence="3">
    <original>PRK</original>
    <variation>AAA</variation>
    <location>
        <begin position="723"/>
        <end position="725"/>
    </location>
</feature>
<feature type="mutagenesis site" description="Host nucleocytoplasmic localization." evidence="3">
    <original>P</original>
    <variation>A</variation>
    <location>
        <position position="723"/>
    </location>
</feature>
<feature type="mutagenesis site" description="Host nucleocytoplasmic localization." evidence="3">
    <original>R</original>
    <variation>A</variation>
    <location>
        <position position="724"/>
    </location>
</feature>
<feature type="mutagenesis site" description="Host nucleocytoplasmic localization." evidence="3">
    <original>K</original>
    <variation>A</variation>
    <location>
        <position position="725"/>
    </location>
</feature>
<feature type="mutagenesis site" description="Host nucleocytoplasmic localization." evidence="3">
    <original>R</original>
    <variation>A</variation>
    <location>
        <position position="729"/>
    </location>
</feature>
<feature type="sequence conflict" description="In Ref. 2; AAB47453." evidence="16" ref="2">
    <original>S</original>
    <variation>C</variation>
    <location>
        <position position="377"/>
    </location>
</feature>
<feature type="sequence conflict" description="In Ref. 2; AAB47453." evidence="16" ref="2">
    <original>P</original>
    <variation>T</variation>
    <location>
        <position position="574"/>
    </location>
</feature>
<name>CAPSD_PAVHV</name>
<comment type="function">
    <text evidence="2 4 6 7 8 10 14 16">Capsid protein self-assembles to form an icosahedral capsid with a T=1 symmetry, about 20 nm in diameter, and consisting of 60 copies of two size variants of the capsid proteins, VP1 and VP2, which differ by the presence of an N-terminal extension in the minor protein VP1 (PubMed:15289612). The capsid encapsulates the genomic ssDNA (Probable). Binds to erythroid progenitor cells expressing high levels of P antigen and uses host ITGA5-ITGB1 and XRCC5/Ku80 autoantigen as coreceptors on the cell surface to provide virion attachment to target cell (PubMed:12907437, PubMed:16076874, PubMed:8211117). This attachment induces virion internalization predominantly through clathrin-dependent endocytosis (PubMed:22718826). Binding to the host receptors also induces capsid rearrangements leading to surface exposure of VP1 N-terminus, specifically its phospholipase A2-like region (PubMed:17020940). The additional N-terminal region of isoform Minor capsid protein VP1, called VP1u, may serve as a lipolytic enzyme to breach the endosomal membrane during entry into host cell and might contribute to virus transport to the nucleus (PubMed:11702787).</text>
</comment>
<comment type="catalytic activity">
    <reaction evidence="2 11">
        <text>a 1,2-diacyl-sn-glycero-3-phosphocholine + H2O = a 1-acyl-sn-glycero-3-phosphocholine + a fatty acid + H(+)</text>
        <dbReference type="Rhea" id="RHEA:15801"/>
        <dbReference type="ChEBI" id="CHEBI:15377"/>
        <dbReference type="ChEBI" id="CHEBI:15378"/>
        <dbReference type="ChEBI" id="CHEBI:28868"/>
        <dbReference type="ChEBI" id="CHEBI:57643"/>
        <dbReference type="ChEBI" id="CHEBI:58168"/>
        <dbReference type="EC" id="3.1.1.4"/>
    </reaction>
</comment>
<comment type="subunit">
    <molecule>Isoform Minor capsid protein VP1</molecule>
    <text evidence="6">Heteromultimer of isoform Minor capsid protein VP1, isoform Minor capsid protein VP2 and isoform Major capsid protein VP3 (PubMed:15289612).</text>
</comment>
<comment type="subunit">
    <molecule>Isoform Major capsid protein VP2</molecule>
    <text evidence="6">Heteromultimer of isoform Minor capsid protein VP1, isoform Minor capsid protein VP2 and isoform Major capsid protein VP3 (PubMed:15289612). 20 fold more abundant than the minor capsid protein VP1 (PubMed:15289612).</text>
</comment>
<comment type="subcellular location">
    <molecule>Isoform Minor capsid protein VP1</molecule>
    <subcellularLocation>
        <location evidence="5 13">Virion</location>
    </subcellularLocation>
    <subcellularLocation>
        <location evidence="3">Host nucleus</location>
    </subcellularLocation>
    <subcellularLocation>
        <location>Host cytoplasm</location>
    </subcellularLocation>
</comment>
<comment type="subcellular location">
    <molecule>Isoform Major capsid protein VP2</molecule>
    <subcellularLocation>
        <location evidence="6">Virion</location>
    </subcellularLocation>
    <subcellularLocation>
        <location evidence="3">Host nucleus</location>
    </subcellularLocation>
    <subcellularLocation>
        <location>Host cytoplasm</location>
    </subcellularLocation>
</comment>
<comment type="alternative products">
    <event type="alternative splicing"/>
    <isoform>
        <id>Q9PZT0-1</id>
        <name>Minor capsid protein VP1</name>
        <sequence type="displayed"/>
    </isoform>
    <isoform>
        <id>Q9PZT0-2</id>
        <name>Major capsid protein VP2</name>
        <sequence type="described" ref="VSP_054247"/>
    </isoform>
</comment>
<comment type="domain">
    <text evidence="8 12">The N-terminus of Isoform Minor capsid protein VP1, VP1u, contains a phospholipase A2-like region (PubMed:17020940). VP1u is necessary and sufficient for host cell binding and internalization (PubMed:26927158).</text>
</comment>
<comment type="domain">
    <text evidence="6 15">A nuclear localization signal is present in the C-terminus and can be recognized by cellular nuclear import molecules (PubMed:15289612). After assembly, it is hidden because it is on the inner capsid surface (PubMed:15289612).</text>
</comment>
<comment type="miscellaneous">
    <molecule>Isoform Minor capsid protein VP1</molecule>
    <text evidence="16">Minor splicing isoform.</text>
</comment>
<comment type="miscellaneous">
    <molecule>Isoform Major capsid protein VP2</molecule>
    <text evidence="16">Major splicing isoform produced by deletion of the initiating AUG for VP1 and downstream translation of VP2.</text>
</comment>
<comment type="similarity">
    <text evidence="16">Belongs to the parvoviridae capsid protein family.</text>
</comment>
<accession>Q9PZT0</accession>
<accession>Q90201</accession>
<accession>Q9PZS9</accession>
<gene>
    <name type="primary">vp</name>
</gene>
<proteinExistence type="evidence at protein level"/>
<keyword id="KW-0002">3D-structure</keyword>
<keyword id="KW-0025">Alternative splicing</keyword>
<keyword id="KW-0167">Capsid protein</keyword>
<keyword id="KW-1165">Clathrin-mediated endocytosis of virus by host</keyword>
<keyword id="KW-1176">Cytoplasmic inwards viral transport</keyword>
<keyword id="KW-1035">Host cytoplasm</keyword>
<keyword id="KW-1048">Host nucleus</keyword>
<keyword id="KW-0945">Host-virus interaction</keyword>
<keyword id="KW-0378">Hydrolase</keyword>
<keyword id="KW-0442">Lipid degradation</keyword>
<keyword id="KW-0443">Lipid metabolism</keyword>
<keyword id="KW-0460">Magnesium</keyword>
<keyword id="KW-0479">Metal-binding</keyword>
<keyword id="KW-1177">Microtubular inwards viral transport</keyword>
<keyword id="KW-1185">Reference proteome</keyword>
<keyword id="KW-1140">T=1 icosahedral capsid protein</keyword>
<keyword id="KW-1161">Viral attachment to host cell</keyword>
<keyword id="KW-1162">Viral penetration into host cytoplasm</keyword>
<keyword id="KW-1163">Viral penetration into host nucleus</keyword>
<keyword id="KW-1173">Viral penetration via permeabilization of host membrane</keyword>
<keyword id="KW-0946">Virion</keyword>
<keyword id="KW-1164">Virus endocytosis by host</keyword>
<keyword id="KW-1160">Virus entry into host cell</keyword>
<sequence length="781" mass="86020">MSKESGKWWESDDKFAKAVYQQFVEFYEKVTGTDLELIQILKDHYNISLDNPLENPSSLFDLVARIKNNLKNSPDLYSHHFQSHGQLSDHPHALSSSSSHAEPRGENAVLSSEDLHKPGQVSVQLPGTNYVGPGNELQAGPPQSAVDSAARIHDFRYSQLAKLGINPYTHWTVADEELLKNIKNETGFQAQVVKDYFTLKGAAAPVAHFQGSLPEVPAYNASEKYPSMTSVNSAEASTGAGGGGSNPVKSMWSEGATFSANSVTCTFSRQFLIPYDPEHHYKVFSPAASSCHNASGKEAKVCTISPIMGYSTPWRYLDFNALNLFFSPLEFQHLIENYGSIAPDALTVTISEIAVKDVTDKTGGGVQVTDSTTGRLSMLVDHEYKYPYVLGQGQDTLAPELPIWVYFPPQYAYLTVGDVNTQGISGDSKKLASEESAFYVLEHSSFQLLGTGGTATMSYKFPPVPPENLEGCSQHFYEMYNPLYGSRLGVPDTLGGDPKFRSLTHEDHAIQPQNFMPGPLVNSVSTKEGDSSNTGAGKALTGLSTGTSQNTRISLRPGPVSQPYHHWDTDKYVPGINAISHGQTTYGNAEDKEYQQGVGRFPNEKEQLKQLQGLNMHTYFPNKGTQQYTDQIERPLMVGSVWNRRALHYESQLWSKIPNLDDSFKTQFAALGGWGLHQPPPQIFLKILPQSGPIGGIKSMGITTLVQYAVGIMTVTMTFKLGPRKATGRWNPQPGVYPPHAAGHLPYVLYDPTATDAKQHHRHGYEKPEELWTAKSRVHPL</sequence>
<organism>
    <name type="scientific">Human parvovirus B19 (strain HV)</name>
    <name type="common">HPV B19</name>
    <dbReference type="NCBI Taxonomy" id="648237"/>
    <lineage>
        <taxon>Viruses</taxon>
        <taxon>Monodnaviria</taxon>
        <taxon>Shotokuvirae</taxon>
        <taxon>Cossaviricota</taxon>
        <taxon>Quintoviricetes</taxon>
        <taxon>Piccovirales</taxon>
        <taxon>Parvoviridae</taxon>
        <taxon>Parvovirinae</taxon>
        <taxon>Erythroparvovirus</taxon>
        <taxon>Erythroparvovirus primate1</taxon>
    </lineage>
</organism>
<evidence type="ECO:0000256" key="1">
    <source>
        <dbReference type="SAM" id="MobiDB-lite"/>
    </source>
</evidence>
<evidence type="ECO:0000269" key="2">
    <source>
    </source>
</evidence>
<evidence type="ECO:0000269" key="3">
    <source>
    </source>
</evidence>
<evidence type="ECO:0000269" key="4">
    <source>
    </source>
</evidence>
<evidence type="ECO:0000269" key="5">
    <source>
    </source>
</evidence>
<evidence type="ECO:0000269" key="6">
    <source>
    </source>
</evidence>
<evidence type="ECO:0000269" key="7">
    <source>
    </source>
</evidence>
<evidence type="ECO:0000269" key="8">
    <source>
    </source>
</evidence>
<evidence type="ECO:0000269" key="9">
    <source>
    </source>
</evidence>
<evidence type="ECO:0000269" key="10">
    <source>
    </source>
</evidence>
<evidence type="ECO:0000269" key="11">
    <source>
    </source>
</evidence>
<evidence type="ECO:0000269" key="12">
    <source>
    </source>
</evidence>
<evidence type="ECO:0000269" key="13">
    <source>
    </source>
</evidence>
<evidence type="ECO:0000269" key="14">
    <source>
    </source>
</evidence>
<evidence type="ECO:0000303" key="15">
    <source>
    </source>
</evidence>
<evidence type="ECO:0000305" key="16"/>
<protein>
    <recommendedName>
        <fullName>Minor capsid protein VP1</fullName>
        <ecNumber evidence="2 11">3.1.1.4</ecNumber>
    </recommendedName>
    <alternativeName>
        <fullName>Coat protein VP1</fullName>
    </alternativeName>
</protein>
<reference key="1">
    <citation type="submission" date="1999-06" db="EMBL/GenBank/DDBJ databases">
        <title>B19 genome sequence and structure analysis.</title>
        <authorList>
            <person name="Gallinella G."/>
            <person name="Venturoli S."/>
        </authorList>
    </citation>
    <scope>NUCLEOTIDE SEQUENCE [GENOMIC DNA]</scope>
</reference>
<reference key="2">
    <citation type="journal article" date="1996" name="J. Gen. Virol.">
        <title>Genetic diversity of human parvovirus B19: sequence analysis of the VP1/VP2 gene from multiple isolates.</title>
        <authorList>
            <person name="Erdman D.D."/>
            <person name="Durigon E.L."/>
            <person name="Wang Q.Y."/>
            <person name="Anderson L.J."/>
        </authorList>
    </citation>
    <scope>NUCLEOTIDE SEQUENCE [GENOMIC DNA] (ISOFORM MAJOR CAPSID PROTEIN VP2)</scope>
</reference>
<reference key="3">
    <citation type="journal article" date="1992" name="J. Clin. Invest.">
        <title>Unique region of the minor capsid protein of human parvovirus B19 is exposed on the virion surface.</title>
        <authorList>
            <person name="Rosenfeld S.J."/>
            <person name="Yoshimoto K."/>
            <person name="Kajigaya S."/>
            <person name="Anderson S."/>
            <person name="Young N.S."/>
            <person name="Field A."/>
            <person name="Warrener P."/>
            <person name="Bansal G."/>
            <person name="Collett M.S."/>
        </authorList>
    </citation>
    <scope>SUBCELLULAR LOCATION</scope>
</reference>
<reference key="4">
    <citation type="journal article" date="1993" name="Science">
        <title>Erythrocyte P antigen: cellular receptor for B19 parvovirus.</title>
        <authorList>
            <person name="Brown K.E."/>
            <person name="Anderson S.M."/>
            <person name="Young N.S."/>
        </authorList>
    </citation>
    <scope>FUNCTION</scope>
</reference>
<reference key="5">
    <citation type="journal article" date="1995" name="Virology">
        <title>Most of the VP1 unique region of B19 parvovirus is on the capsid surface.</title>
        <authorList>
            <person name="Kawase M."/>
            <person name="Momoeda M."/>
            <person name="Young N.S."/>
            <person name="Kajigaya S."/>
        </authorList>
    </citation>
    <scope>SUBCELLULAR LOCATION</scope>
</reference>
<reference key="6">
    <citation type="journal article" date="2001" name="Dev. Cell">
        <title>A viral phospholipase A2 is required for parvovirus infectivity.</title>
        <authorList>
            <person name="Zadori Z."/>
            <person name="Szelei J."/>
            <person name="Lacoste M.C."/>
            <person name="Li Y."/>
            <person name="Gariepy S."/>
            <person name="Raymond P."/>
            <person name="Allaire M."/>
            <person name="Nabi I.R."/>
            <person name="Tijssen P."/>
        </authorList>
    </citation>
    <scope>CATALYTIC ACTIVITY</scope>
    <scope>FUNCTION</scope>
</reference>
<reference key="7">
    <citation type="journal article" date="2003" name="Blood">
        <title>Alpha5beta1 integrin as a cellular coreceptor for human parvovirus B19: requirement of functional activation of beta1 integrin for viral entry.</title>
        <authorList>
            <person name="Weigel-Kelley K.A."/>
            <person name="Yoder M.C."/>
            <person name="Srivastava A."/>
        </authorList>
    </citation>
    <scope>FUNCTION</scope>
</reference>
<reference key="8">
    <citation type="journal article" date="2003" name="Virology">
        <title>Identification of a nonconventional motif necessary for the nuclear import of the human parvovirus B19 major capsid protein (VP2).</title>
        <authorList>
            <person name="Pillet S."/>
            <person name="Annan Z."/>
            <person name="Fichelson S."/>
            <person name="Morinet F."/>
        </authorList>
    </citation>
    <scope>SUBCELLULAR LOCATION</scope>
    <scope>MUTAGENESIS OF LYS-720; PRO-723; ARG-724; LYS-725; ARG-729 AND 723-PRO--LYS-725</scope>
    <scope>FUNCTION</scope>
    <scope>NUCLEAR LOCALIZATION SIGNAL</scope>
</reference>
<reference key="9">
    <citation type="journal article" date="2005" name="Blood">
        <title>Ku80 autoantigen as a cellular coreceptor for human parvovirus B19 infection.</title>
        <authorList>
            <person name="Munakata Y."/>
            <person name="Saito-Ito T."/>
            <person name="Kumura-Ishii K."/>
            <person name="Huang J."/>
            <person name="Kodera T."/>
            <person name="Ishii T."/>
            <person name="Hirabayashi Y."/>
            <person name="Koyanagi Y."/>
            <person name="Sasaki T."/>
        </authorList>
    </citation>
    <scope>FUNCTION</scope>
</reference>
<reference key="10">
    <citation type="journal article" date="2006" name="J. Virol.">
        <title>Conformational changes in the VP1-unique region of native human parvovirus B19 lead to exposure of internal sequences that play a role in virus neutralization and infectivity.</title>
        <authorList>
            <person name="Ros C."/>
            <person name="Gerber M."/>
            <person name="Kempf C."/>
        </authorList>
    </citation>
    <scope>FUNCTION</scope>
    <scope>DOMAIN</scope>
</reference>
<reference key="11">
    <citation type="journal article" date="2008" name="Virology">
        <title>VP1u phospholipase activity is critical for infectivity of full-length parvovirus B19 genomic clones.</title>
        <authorList>
            <person name="Filippone C."/>
            <person name="Zhi N."/>
            <person name="Wong S."/>
            <person name="Lu J."/>
            <person name="Kajigaya S."/>
            <person name="Gallinella G."/>
            <person name="Kakkola L."/>
            <person name="Soederlund-Venermo M."/>
            <person name="Young N.S."/>
            <person name="Brown K.E."/>
        </authorList>
    </citation>
    <scope>CATALYTIC ACTIVITY</scope>
    <scope>MUTAGENESIS OF GLU-176</scope>
</reference>
<reference key="12">
    <citation type="journal article" date="2012" name="J. Virol.">
        <title>Characterization of the early steps of human parvovirus B19 infection.</title>
        <authorList>
            <person name="Quattrocchi S."/>
            <person name="Ruprecht N."/>
            <person name="Bonsch C."/>
            <person name="Bieli S."/>
            <person name="Zurcher C."/>
            <person name="Boller K."/>
            <person name="Kempf C."/>
            <person name="Ros C."/>
        </authorList>
    </citation>
    <scope>FUNCTION</scope>
    <scope>SUBCELLULAR LOCATION</scope>
</reference>
<reference key="13">
    <citation type="journal article" date="2013" name="PLoS ONE">
        <title>The determinants for the enzyme activity of human parvovirus B19 phospholipase A2 (PLA2) and its influence on cultured cells.</title>
        <authorList>
            <person name="Deng X."/>
            <person name="Dong Y."/>
            <person name="Yi Q."/>
            <person name="Huang Y."/>
            <person name="Zhao D."/>
            <person name="Yang Y."/>
            <person name="Tijssen P."/>
            <person name="Qiu J."/>
            <person name="Liu K."/>
            <person name="Li Y."/>
        </authorList>
    </citation>
    <scope>CATALYTIC ACTIVITY</scope>
    <scope>MUTAGENESIS OF TYR-130; GLY-132; PRO-133; HIS-153; ASP-154; TYR-157; LYS-162; TYR-168; ASP-175; ASP-195 AND ALA-207</scope>
</reference>
<reference key="14">
    <citation type="journal article" date="2016" name="Viruses">
        <title>The Receptor-Binding Domain in the VP1u Region of Parvovirus B19.</title>
        <authorList>
            <person name="Leisi R."/>
            <person name="Di Tommaso C."/>
            <person name="Kempf C."/>
            <person name="Ros C."/>
        </authorList>
    </citation>
    <scope>DOMAIN</scope>
    <scope>FUNCTION</scope>
    <scope>MUTAGENESIS OF PHE-15; ALA-16; VAL-19; TYR-20; GLN-21; GLN-22; PHE-23; PHE-26; TYR-27 AND LYS-29</scope>
</reference>
<reference key="15">
    <citation type="journal article" date="2004" name="Proc. Natl. Acad. Sci. U.S.A.">
        <title>The structure of human parvovirus B19.</title>
        <authorList>
            <person name="Kaufmann B."/>
            <person name="Simpson A.A."/>
            <person name="Rossmann M.G."/>
        </authorList>
    </citation>
    <scope>X-RAY CRYSTALLOGRAPHY (3.50 ANGSTROMS) OF 228-781</scope>
    <scope>DOMAIN</scope>
    <scope>SUBUNIT</scope>
</reference>
<organismHost>
    <name type="scientific">Homo sapiens</name>
    <name type="common">Human</name>
    <dbReference type="NCBI Taxonomy" id="9606"/>
</organismHost>